<comment type="function">
    <text evidence="9">Within the IPP (ILK-PINCH-PARVIN) complex, binds to F-actin, promoting F-actin bundling, a process required to generate force for actin cytoskeleton reorganization and subsequent dynamic cell adhesion events such as cell spreading and migration.</text>
</comment>
<comment type="subunit">
    <text evidence="1 3 4 5 7 8 9 10">Component of the heterotrimeric IPP (ILK-PINCH-PARVIN) complex composed of ILK, LIMS1/PINCH and PARVA; the complex binds to F-actin via the C-terminal tail of LIMS1 and the N-terminal region of PARVA, promoting F-actin filament bundling (PubMed:11331308, PubMed:12432066, PubMed:30367047). Formation of the IPP complex is dependent on protein kinase C and precedes integrin-mediated cell adhesion and spreading (PubMed:12432066). Competes with LIMS2 for interaction with ILK. Interacts (via LIM zinc-binding 5) with TGFB1I1 (By similarity). Interacts with SH3/SH2 adapter NCK2, thereby linking the complex to cell surface receptors.</text>
</comment>
<comment type="interaction">
    <interactant intactId="EBI-306928">
        <id>P48059</id>
    </interactant>
    <interactant intactId="EBI-747644">
        <id>Q13418</id>
        <label>ILK</label>
    </interactant>
    <organismsDiffer>false</organismsDiffer>
    <experiments>17</experiments>
</comment>
<comment type="interaction">
    <interactant intactId="EBI-306928">
        <id>P48059</id>
    </interactant>
    <interactant intactId="EBI-713635">
        <id>O43639</id>
        <label>NCK2</label>
    </interactant>
    <organismsDiffer>false</organismsDiffer>
    <experiments>2</experiments>
</comment>
<comment type="interaction">
    <interactant intactId="EBI-306928">
        <id>P48059</id>
    </interactant>
    <interactant intactId="EBI-1057132">
        <id>Q15404</id>
        <label>RSU1</label>
    </interactant>
    <organismsDiffer>false</organismsDiffer>
    <experiments>8</experiments>
</comment>
<comment type="interaction">
    <interactant intactId="EBI-306928">
        <id>P48059</id>
    </interactant>
    <interactant intactId="EBI-3957603">
        <id>P09022</id>
        <label>Hoxa1</label>
    </interactant>
    <organismsDiffer>true</organismsDiffer>
    <experiments>3</experiments>
</comment>
<comment type="interaction">
    <interactant intactId="EBI-306928">
        <id>P48059</id>
    </interactant>
    <interactant intactId="EBI-6690138">
        <id>O55222</id>
        <label>Ilk</label>
    </interactant>
    <organismsDiffer>true</organismsDiffer>
    <experiments>4</experiments>
</comment>
<comment type="interaction">
    <interactant intactId="EBI-12864460">
        <id>P48059-3</id>
    </interactant>
    <interactant intactId="EBI-744545">
        <id>Q8NEC5</id>
        <label>CATSPER1</label>
    </interactant>
    <organismsDiffer>false</organismsDiffer>
    <experiments>3</experiments>
</comment>
<comment type="interaction">
    <interactant intactId="EBI-12864460">
        <id>P48059-3</id>
    </interactant>
    <interactant intactId="EBI-747133">
        <id>P27658</id>
        <label>COL8A1</label>
    </interactant>
    <organismsDiffer>false</organismsDiffer>
    <experiments>3</experiments>
</comment>
<comment type="interaction">
    <interactant intactId="EBI-12864460">
        <id>P48059-3</id>
    </interactant>
    <interactant intactId="EBI-5453285">
        <id>Q2TBE0</id>
        <label>CWF19L2</label>
    </interactant>
    <organismsDiffer>false</organismsDiffer>
    <experiments>3</experiments>
</comment>
<comment type="interaction">
    <interactant intactId="EBI-12864460">
        <id>P48059-3</id>
    </interactant>
    <interactant intactId="EBI-6658203">
        <id>Q86YD7</id>
        <label>FAM90A1</label>
    </interactant>
    <organismsDiffer>false</organismsDiffer>
    <experiments>3</experiments>
</comment>
<comment type="interaction">
    <interactant intactId="EBI-12864460">
        <id>P48059-3</id>
    </interactant>
    <interactant intactId="EBI-744104">
        <id>P55040</id>
        <label>GEM</label>
    </interactant>
    <organismsDiffer>false</organismsDiffer>
    <experiments>3</experiments>
</comment>
<comment type="interaction">
    <interactant intactId="EBI-12864460">
        <id>P48059-3</id>
    </interactant>
    <interactant intactId="EBI-747644">
        <id>Q13418</id>
        <label>ILK</label>
    </interactant>
    <organismsDiffer>false</organismsDiffer>
    <experiments>3</experiments>
</comment>
<comment type="interaction">
    <interactant intactId="EBI-12864460">
        <id>P48059-3</id>
    </interactant>
    <interactant intactId="EBI-715611">
        <id>Q9C086</id>
        <label>INO80B</label>
    </interactant>
    <organismsDiffer>false</organismsDiffer>
    <experiments>3</experiments>
</comment>
<comment type="interaction">
    <interactant intactId="EBI-12864460">
        <id>P48059-3</id>
    </interactant>
    <interactant intactId="EBI-10981970">
        <id>Q5T749</id>
        <label>KPRP</label>
    </interactant>
    <organismsDiffer>false</organismsDiffer>
    <experiments>3</experiments>
</comment>
<comment type="interaction">
    <interactant intactId="EBI-12864460">
        <id>P48059-3</id>
    </interactant>
    <interactant intactId="EBI-11742507">
        <id>Q8TAP4-4</id>
        <label>LMO3</label>
    </interactant>
    <organismsDiffer>false</organismsDiffer>
    <experiments>3</experiments>
</comment>
<comment type="interaction">
    <interactant intactId="EBI-12864460">
        <id>P48059-3</id>
    </interactant>
    <interactant intactId="EBI-7950783">
        <id>Q96JP2</id>
        <label>MYO15B</label>
    </interactant>
    <organismsDiffer>false</organismsDiffer>
    <experiments>3</experiments>
</comment>
<comment type="interaction">
    <interactant intactId="EBI-12864460">
        <id>P48059-3</id>
    </interactant>
    <interactant intactId="EBI-1055693">
        <id>O75771</id>
        <label>RAD51D</label>
    </interactant>
    <organismsDiffer>false</organismsDiffer>
    <experiments>3</experiments>
</comment>
<comment type="interaction">
    <interactant intactId="EBI-12864460">
        <id>P48059-3</id>
    </interactant>
    <interactant intactId="EBI-748391">
        <id>Q9BWG6</id>
        <label>SCNM1</label>
    </interactant>
    <organismsDiffer>false</organismsDiffer>
    <experiments>3</experiments>
</comment>
<comment type="interaction">
    <interactant intactId="EBI-12864460">
        <id>P48059-3</id>
    </interactant>
    <interactant intactId="EBI-8787464">
        <id>Q9NU19</id>
        <label>TBC1D22B</label>
    </interactant>
    <organismsDiffer>false</organismsDiffer>
    <experiments>3</experiments>
</comment>
<comment type="interaction">
    <interactant intactId="EBI-12864460">
        <id>P48059-3</id>
    </interactant>
    <interactant intactId="EBI-710310">
        <id>Q15560</id>
        <label>TCEA2</label>
    </interactant>
    <organismsDiffer>false</organismsDiffer>
    <experiments>3</experiments>
</comment>
<comment type="interaction">
    <interactant intactId="EBI-12864460">
        <id>P48059-3</id>
    </interactant>
    <interactant intactId="EBI-11962760">
        <id>Q9NZV7</id>
        <label>ZIM2</label>
    </interactant>
    <organismsDiffer>false</organismsDiffer>
    <experiments>3</experiments>
</comment>
<comment type="interaction">
    <interactant intactId="EBI-12864460">
        <id>P48059-3</id>
    </interactant>
    <interactant intactId="EBI-11741890">
        <id>Q86VK4-3</id>
        <label>ZNF410</label>
    </interactant>
    <organismsDiffer>false</organismsDiffer>
    <experiments>3</experiments>
</comment>
<comment type="interaction">
    <interactant intactId="EBI-12864460">
        <id>P48059-3</id>
    </interactant>
    <interactant intactId="EBI-740727">
        <id>Q8TAU3</id>
        <label>ZNF417</label>
    </interactant>
    <organismsDiffer>false</organismsDiffer>
    <experiments>3</experiments>
</comment>
<comment type="interaction">
    <interactant intactId="EBI-12864460">
        <id>P48059-3</id>
    </interactant>
    <interactant intactId="EBI-10273713">
        <id>Q8TBZ8</id>
        <label>ZNF564</label>
    </interactant>
    <organismsDiffer>false</organismsDiffer>
    <experiments>3</experiments>
</comment>
<comment type="interaction">
    <interactant intactId="EBI-12864460">
        <id>P48059-3</id>
    </interactant>
    <interactant intactId="EBI-6427977">
        <id>Q96SQ5</id>
        <label>ZNF587</label>
    </interactant>
    <organismsDiffer>false</organismsDiffer>
    <experiments>3</experiments>
</comment>
<comment type="subcellular location">
    <subcellularLocation>
        <location evidence="5">Cell junction</location>
        <location evidence="5">Focal adhesion</location>
    </subcellularLocation>
    <subcellularLocation>
        <location>Cell membrane</location>
        <topology>Peripheral membrane protein</topology>
        <orientation>Cytoplasmic side</orientation>
    </subcellularLocation>
</comment>
<comment type="alternative products">
    <event type="alternative splicing"/>
    <isoform>
        <id>P48059-1</id>
        <name>1</name>
        <sequence type="displayed"/>
    </isoform>
    <isoform>
        <id>P48059-2</id>
        <name>2</name>
        <sequence type="described" ref="VSP_042672"/>
    </isoform>
    <isoform>
        <id>P48059-3</id>
        <name>3</name>
        <sequence type="described" ref="VSP_043210"/>
    </isoform>
    <isoform>
        <id>P48059-4</id>
        <name>4</name>
        <sequence type="described" ref="VSP_043211"/>
    </isoform>
    <isoform>
        <id>P48059-5</id>
        <name>5</name>
        <sequence type="described" ref="VSP_043212"/>
    </isoform>
</comment>
<comment type="tissue specificity">
    <text>Expressed in most tissues except in the brain.</text>
</comment>
<keyword id="KW-0002">3D-structure</keyword>
<keyword id="KW-0007">Acetylation</keyword>
<keyword id="KW-0009">Actin-binding</keyword>
<keyword id="KW-0025">Alternative splicing</keyword>
<keyword id="KW-0965">Cell junction</keyword>
<keyword id="KW-1003">Cell membrane</keyword>
<keyword id="KW-0903">Direct protein sequencing</keyword>
<keyword id="KW-0440">LIM domain</keyword>
<keyword id="KW-0472">Membrane</keyword>
<keyword id="KW-0479">Metal-binding</keyword>
<keyword id="KW-1267">Proteomics identification</keyword>
<keyword id="KW-1185">Reference proteome</keyword>
<keyword id="KW-0677">Repeat</keyword>
<keyword id="KW-0862">Zinc</keyword>
<feature type="initiator methionine" description="Removed" evidence="6">
    <location>
        <position position="1"/>
    </location>
</feature>
<feature type="chain" id="PRO_0000075888" description="LIM and senescent cell antigen-like-containing domain protein 1">
    <location>
        <begin position="2"/>
        <end position="325"/>
    </location>
</feature>
<feature type="domain" description="LIM zinc-binding 1" evidence="2">
    <location>
        <begin position="10"/>
        <end position="62"/>
    </location>
</feature>
<feature type="domain" description="LIM zinc-binding 2" evidence="2">
    <location>
        <begin position="71"/>
        <end position="121"/>
    </location>
</feature>
<feature type="domain" description="LIM zinc-binding 3" evidence="2">
    <location>
        <begin position="135"/>
        <end position="184"/>
    </location>
</feature>
<feature type="domain" description="LIM zinc-binding 4" evidence="2">
    <location>
        <begin position="193"/>
        <end position="243"/>
    </location>
</feature>
<feature type="domain" description="LIM zinc-binding 5" evidence="2">
    <location>
        <begin position="252"/>
        <end position="303"/>
    </location>
</feature>
<feature type="modified residue" description="N-acetylalanine" evidence="6">
    <location>
        <position position="2"/>
    </location>
</feature>
<feature type="splice variant" id="VSP_042672" description="In isoform 2." evidence="11">
    <original>M</original>
    <variation>MLGVAAGMTHSNM</variation>
    <location>
        <position position="1"/>
    </location>
</feature>
<feature type="splice variant" id="VSP_043210" description="In isoform 3." evidence="11">
    <original>M</original>
    <variation>MAFSGRARPCIIPENEEIPRAALNTVHEANGTEDERAVSKLQRRHSDVKVYKEFCDFYAKFNM</variation>
    <location>
        <position position="1"/>
    </location>
</feature>
<feature type="splice variant" id="VSP_043211" description="In isoform 4." evidence="12">
    <original>M</original>
    <variation>MTCNM</variation>
    <location>
        <position position="1"/>
    </location>
</feature>
<feature type="splice variant" id="VSP_043212" description="In isoform 5." evidence="11">
    <original>M</original>
    <variation>MTALQLKELSHSGLYRRRRDRPDSLRVNGLPEEELSNM</variation>
    <location>
        <position position="1"/>
    </location>
</feature>
<feature type="mutagenesis site" description="Loss of interaction with ILK and loss of localization to focal adhesions." evidence="5">
    <original>Q</original>
    <variation>A</variation>
    <location>
        <position position="40"/>
    </location>
</feature>
<feature type="mutagenesis site" description="Loss of interaction with ILK and loss of localization to focal adhesions." evidence="7 8">
    <original>F</original>
    <variation>A</variation>
    <location>
        <position position="42"/>
    </location>
</feature>
<feature type="mutagenesis site" description="Alters interaction with ILK." evidence="8">
    <original>R</original>
    <variation>A</variation>
    <location>
        <position position="56"/>
    </location>
</feature>
<feature type="mutagenesis site" description="Alters interaction with ILK." evidence="7">
    <original>H</original>
    <variation>D</variation>
    <location>
        <position position="61"/>
    </location>
</feature>
<feature type="mutagenesis site" description="Alters interaction with ILK." evidence="7">
    <original>D</original>
    <variation>A</variation>
    <location>
        <position position="62"/>
    </location>
</feature>
<feature type="mutagenesis site" description="Alters interaction with ILK." evidence="7">
    <original>L</original>
    <variation>D</variation>
    <location>
        <position position="66"/>
    </location>
</feature>
<feature type="mutagenesis site" description="Reduced actin binding and reduced F-actin bundling. Impaired cell spreading." evidence="9">
    <original>FPLELKK</original>
    <variation>APLEAAA</variation>
    <location>
        <begin position="307"/>
        <end position="313"/>
    </location>
</feature>
<feature type="sequence conflict" description="In Ref. 5; AAH05341." evidence="12" ref="5">
    <original>I</original>
    <variation>T</variation>
    <location>
        <position position="78"/>
    </location>
</feature>
<feature type="sequence conflict" description="In Ref. 5; AAH05341." evidence="12" ref="5">
    <original>D</original>
    <variation>G</variation>
    <location>
        <position position="262"/>
    </location>
</feature>
<feature type="turn" evidence="17">
    <location>
        <begin position="11"/>
        <end position="13"/>
    </location>
</feature>
<feature type="strand" evidence="17">
    <location>
        <begin position="22"/>
        <end position="26"/>
    </location>
</feature>
<feature type="strand" evidence="17">
    <location>
        <begin position="29"/>
        <end position="32"/>
    </location>
</feature>
<feature type="turn" evidence="17">
    <location>
        <begin position="33"/>
        <end position="35"/>
    </location>
</feature>
<feature type="turn" evidence="17">
    <location>
        <begin position="39"/>
        <end position="41"/>
    </location>
</feature>
<feature type="helix" evidence="17">
    <location>
        <begin position="46"/>
        <end position="48"/>
    </location>
</feature>
<feature type="strand" evidence="17">
    <location>
        <begin position="51"/>
        <end position="53"/>
    </location>
</feature>
<feature type="strand" evidence="17">
    <location>
        <begin position="56"/>
        <end position="58"/>
    </location>
</feature>
<feature type="helix" evidence="17">
    <location>
        <begin position="60"/>
        <end position="66"/>
    </location>
</feature>
<feature type="strand" evidence="16">
    <location>
        <begin position="72"/>
        <end position="74"/>
    </location>
</feature>
<feature type="strand" evidence="16">
    <location>
        <begin position="83"/>
        <end position="85"/>
    </location>
</feature>
<feature type="strand" evidence="16">
    <location>
        <begin position="88"/>
        <end position="90"/>
    </location>
</feature>
<feature type="turn" evidence="16">
    <location>
        <begin position="92"/>
        <end position="94"/>
    </location>
</feature>
<feature type="strand" evidence="16">
    <location>
        <begin position="98"/>
        <end position="100"/>
    </location>
</feature>
<feature type="strand" evidence="16">
    <location>
        <begin position="105"/>
        <end position="107"/>
    </location>
</feature>
<feature type="strand" evidence="16">
    <location>
        <begin position="110"/>
        <end position="112"/>
    </location>
</feature>
<feature type="strand" evidence="16">
    <location>
        <begin position="115"/>
        <end position="117"/>
    </location>
</feature>
<feature type="helix" evidence="16">
    <location>
        <begin position="119"/>
        <end position="126"/>
    </location>
</feature>
<feature type="turn" evidence="15">
    <location>
        <begin position="136"/>
        <end position="138"/>
    </location>
</feature>
<feature type="strand" evidence="15">
    <location>
        <begin position="150"/>
        <end position="152"/>
    </location>
</feature>
<feature type="turn" evidence="15">
    <location>
        <begin position="156"/>
        <end position="158"/>
    </location>
</feature>
<feature type="strand" evidence="15">
    <location>
        <begin position="162"/>
        <end position="164"/>
    </location>
</feature>
<feature type="strand" evidence="15">
    <location>
        <begin position="173"/>
        <end position="175"/>
    </location>
</feature>
<feature type="strand" evidence="15">
    <location>
        <begin position="178"/>
        <end position="180"/>
    </location>
</feature>
<feature type="helix" evidence="15">
    <location>
        <begin position="182"/>
        <end position="186"/>
    </location>
</feature>
<feature type="turn" evidence="20">
    <location>
        <begin position="194"/>
        <end position="196"/>
    </location>
</feature>
<feature type="strand" evidence="20">
    <location>
        <begin position="204"/>
        <end position="207"/>
    </location>
</feature>
<feature type="strand" evidence="20">
    <location>
        <begin position="210"/>
        <end position="212"/>
    </location>
</feature>
<feature type="turn" evidence="20">
    <location>
        <begin position="214"/>
        <end position="216"/>
    </location>
</feature>
<feature type="strand" evidence="20">
    <location>
        <begin position="220"/>
        <end position="222"/>
    </location>
</feature>
<feature type="strand" evidence="14">
    <location>
        <begin position="227"/>
        <end position="229"/>
    </location>
</feature>
<feature type="strand" evidence="20">
    <location>
        <begin position="232"/>
        <end position="234"/>
    </location>
</feature>
<feature type="strand" evidence="20">
    <location>
        <begin position="237"/>
        <end position="239"/>
    </location>
</feature>
<feature type="helix" evidence="20">
    <location>
        <begin position="241"/>
        <end position="248"/>
    </location>
</feature>
<feature type="turn" evidence="19">
    <location>
        <begin position="253"/>
        <end position="255"/>
    </location>
</feature>
<feature type="strand" evidence="18">
    <location>
        <begin position="256"/>
        <end position="258"/>
    </location>
</feature>
<feature type="strand" evidence="19">
    <location>
        <begin position="263"/>
        <end position="266"/>
    </location>
</feature>
<feature type="strand" evidence="19">
    <location>
        <begin position="269"/>
        <end position="272"/>
    </location>
</feature>
<feature type="turn" evidence="19">
    <location>
        <begin position="273"/>
        <end position="275"/>
    </location>
</feature>
<feature type="turn" evidence="19">
    <location>
        <begin position="279"/>
        <end position="281"/>
    </location>
</feature>
<feature type="strand" evidence="19">
    <location>
        <begin position="291"/>
        <end position="294"/>
    </location>
</feature>
<feature type="strand" evidence="19">
    <location>
        <begin position="297"/>
        <end position="300"/>
    </location>
</feature>
<feature type="helix" evidence="19">
    <location>
        <begin position="301"/>
        <end position="305"/>
    </location>
</feature>
<feature type="helix" evidence="19">
    <location>
        <begin position="309"/>
        <end position="317"/>
    </location>
</feature>
<accession>P48059</accession>
<accession>B2RAJ4</accession>
<accession>B7Z483</accession>
<accession>B7Z7R3</accession>
<accession>B7Z907</accession>
<accession>Q53TE0</accession>
<accession>Q9BS44</accession>
<evidence type="ECO:0000250" key="1"/>
<evidence type="ECO:0000255" key="2">
    <source>
        <dbReference type="PROSITE-ProRule" id="PRU00125"/>
    </source>
</evidence>
<evidence type="ECO:0000269" key="3">
    <source>
    </source>
</evidence>
<evidence type="ECO:0000269" key="4">
    <source>
    </source>
</evidence>
<evidence type="ECO:0000269" key="5">
    <source>
    </source>
</evidence>
<evidence type="ECO:0000269" key="6">
    <source>
    </source>
</evidence>
<evidence type="ECO:0000269" key="7">
    <source>
    </source>
</evidence>
<evidence type="ECO:0000269" key="8">
    <source>
    </source>
</evidence>
<evidence type="ECO:0000269" key="9">
    <source>
    </source>
</evidence>
<evidence type="ECO:0000269" key="10">
    <source>
    </source>
</evidence>
<evidence type="ECO:0000303" key="11">
    <source>
    </source>
</evidence>
<evidence type="ECO:0000305" key="12"/>
<evidence type="ECO:0007744" key="13">
    <source>
        <dbReference type="PDB" id="6MIF"/>
    </source>
</evidence>
<evidence type="ECO:0007829" key="14">
    <source>
        <dbReference type="PDB" id="1NYP"/>
    </source>
</evidence>
<evidence type="ECO:0007829" key="15">
    <source>
        <dbReference type="PDB" id="2COR"/>
    </source>
</evidence>
<evidence type="ECO:0007829" key="16">
    <source>
        <dbReference type="PDB" id="2D8X"/>
    </source>
</evidence>
<evidence type="ECO:0007829" key="17">
    <source>
        <dbReference type="PDB" id="4HI8"/>
    </source>
</evidence>
<evidence type="ECO:0007829" key="18">
    <source>
        <dbReference type="PDB" id="6MIF"/>
    </source>
</evidence>
<evidence type="ECO:0007829" key="19">
    <source>
        <dbReference type="PDB" id="7D2S"/>
    </source>
</evidence>
<evidence type="ECO:0007829" key="20">
    <source>
        <dbReference type="PDB" id="7D2T"/>
    </source>
</evidence>
<gene>
    <name type="primary">LIMS1</name>
    <name type="synonym">PINCH</name>
    <name type="synonym">PINCH1</name>
</gene>
<sequence>MANALASATCERCKGGFAPAEKIVNSNGELYHEQCFVCAQCFQQFPEGLFYEFEGRKYCEHDFQMLFAPCCHQCGEFIIGRVIKAMNNSWHPECFRCDLCQEVLADIGFVKNAGRHLCRPCHNREKARGLGKYICQKCHAIIDEQPLIFKNDPYHPDHFNCANCGKELTADARELKGELYCLPCHDKMGVPICGACRRPIEGRVVNAMGKQWHVEHFVCAKCEKPFLGHRHYERKGLAYCETHYNQLFGDVCFHCNRVIEGDVVSALNKAWCVNCFACSTCNTKLTLKNKFVEFDMKPVCKKCYEKFPLELKKRLKKLAETLGRK</sequence>
<proteinExistence type="evidence at protein level"/>
<name>LIMS1_HUMAN</name>
<dbReference type="EMBL" id="U09284">
    <property type="protein sequence ID" value="AAA20086.2"/>
    <property type="molecule type" value="mRNA"/>
</dbReference>
<dbReference type="EMBL" id="AK296992">
    <property type="protein sequence ID" value="BAH12469.1"/>
    <property type="molecule type" value="mRNA"/>
</dbReference>
<dbReference type="EMBL" id="AK302411">
    <property type="protein sequence ID" value="BAH13699.1"/>
    <property type="molecule type" value="mRNA"/>
</dbReference>
<dbReference type="EMBL" id="AK304260">
    <property type="protein sequence ID" value="BAH14143.1"/>
    <property type="molecule type" value="mRNA"/>
</dbReference>
<dbReference type="EMBL" id="AK314217">
    <property type="protein sequence ID" value="BAG36891.1"/>
    <property type="molecule type" value="mRNA"/>
</dbReference>
<dbReference type="EMBL" id="AC010095">
    <property type="protein sequence ID" value="AAY14983.1"/>
    <property type="molecule type" value="Genomic_DNA"/>
</dbReference>
<dbReference type="EMBL" id="AC012487">
    <property type="status" value="NOT_ANNOTATED_CDS"/>
    <property type="molecule type" value="Genomic_DNA"/>
</dbReference>
<dbReference type="EMBL" id="BC005341">
    <property type="protein sequence ID" value="AAH05341.1"/>
    <property type="molecule type" value="mRNA"/>
</dbReference>
<dbReference type="CCDS" id="CCDS2078.1">
    <molecule id="P48059-1"/>
</dbReference>
<dbReference type="CCDS" id="CCDS54382.1">
    <molecule id="P48059-2"/>
</dbReference>
<dbReference type="CCDS" id="CCDS54383.1">
    <molecule id="P48059-4"/>
</dbReference>
<dbReference type="CCDS" id="CCDS54384.1">
    <molecule id="P48059-5"/>
</dbReference>
<dbReference type="CCDS" id="CCDS54385.1">
    <molecule id="P48059-3"/>
</dbReference>
<dbReference type="PIR" id="JC2324">
    <property type="entry name" value="JC2324"/>
</dbReference>
<dbReference type="RefSeq" id="NP_001180411.1">
    <molecule id="P48059-4"/>
    <property type="nucleotide sequence ID" value="NM_001193482.2"/>
</dbReference>
<dbReference type="RefSeq" id="NP_001180412.1">
    <molecule id="P48059-2"/>
    <property type="nucleotide sequence ID" value="NM_001193483.3"/>
</dbReference>
<dbReference type="RefSeq" id="NP_001180413.1">
    <molecule id="P48059-5"/>
    <property type="nucleotide sequence ID" value="NM_001193484.2"/>
</dbReference>
<dbReference type="RefSeq" id="NP_001180414.1">
    <molecule id="P48059-3"/>
    <property type="nucleotide sequence ID" value="NM_001193485.3"/>
</dbReference>
<dbReference type="RefSeq" id="NP_001180417.1">
    <molecule id="P48059-1"/>
    <property type="nucleotide sequence ID" value="NM_001193488.2"/>
</dbReference>
<dbReference type="RefSeq" id="NP_001358427.1">
    <molecule id="P48059-1"/>
    <property type="nucleotide sequence ID" value="NM_001371498.1"/>
</dbReference>
<dbReference type="RefSeq" id="NP_004978.2">
    <molecule id="P48059-1"/>
    <property type="nucleotide sequence ID" value="NM_004987.5"/>
</dbReference>
<dbReference type="PDB" id="1G47">
    <property type="method" value="NMR"/>
    <property type="chains" value="A=1-70"/>
</dbReference>
<dbReference type="PDB" id="1NYP">
    <property type="method" value="NMR"/>
    <property type="chains" value="A=188-251"/>
</dbReference>
<dbReference type="PDB" id="1U5S">
    <property type="method" value="NMR"/>
    <property type="chains" value="B=188-251"/>
</dbReference>
<dbReference type="PDB" id="2COR">
    <property type="method" value="NMR"/>
    <property type="chains" value="A=125-190"/>
</dbReference>
<dbReference type="PDB" id="2D8X">
    <property type="method" value="NMR"/>
    <property type="chains" value="A=71-127"/>
</dbReference>
<dbReference type="PDB" id="2KBX">
    <property type="method" value="NMR"/>
    <property type="chains" value="B=1-70"/>
</dbReference>
<dbReference type="PDB" id="3F6Q">
    <property type="method" value="X-ray"/>
    <property type="resolution" value="1.60 A"/>
    <property type="chains" value="B=6-68"/>
</dbReference>
<dbReference type="PDB" id="4HI8">
    <property type="method" value="X-ray"/>
    <property type="resolution" value="1.20 A"/>
    <property type="chains" value="B=6-68"/>
</dbReference>
<dbReference type="PDB" id="4HI9">
    <property type="method" value="X-ray"/>
    <property type="resolution" value="1.20 A"/>
    <property type="chains" value="B=6-68"/>
</dbReference>
<dbReference type="PDB" id="6MIF">
    <property type="method" value="NMR"/>
    <property type="chains" value="A=249-325"/>
</dbReference>
<dbReference type="PDB" id="7D2S">
    <property type="method" value="X-ray"/>
    <property type="resolution" value="1.65 A"/>
    <property type="chains" value="B=249-325"/>
</dbReference>
<dbReference type="PDB" id="7D2T">
    <property type="method" value="X-ray"/>
    <property type="resolution" value="2.20 A"/>
    <property type="chains" value="B/D=188-325"/>
</dbReference>
<dbReference type="PDB" id="7D2U">
    <property type="method" value="X-ray"/>
    <property type="resolution" value="3.15 A"/>
    <property type="chains" value="B=188-325"/>
</dbReference>
<dbReference type="PDB" id="7LT9">
    <property type="method" value="X-ray"/>
    <property type="resolution" value="3.05 A"/>
    <property type="chains" value="B=189-325"/>
</dbReference>
<dbReference type="PDBsum" id="1G47"/>
<dbReference type="PDBsum" id="1NYP"/>
<dbReference type="PDBsum" id="1U5S"/>
<dbReference type="PDBsum" id="2COR"/>
<dbReference type="PDBsum" id="2D8X"/>
<dbReference type="PDBsum" id="2KBX"/>
<dbReference type="PDBsum" id="3F6Q"/>
<dbReference type="PDBsum" id="4HI8"/>
<dbReference type="PDBsum" id="4HI9"/>
<dbReference type="PDBsum" id="6MIF"/>
<dbReference type="PDBsum" id="7D2S"/>
<dbReference type="PDBsum" id="7D2T"/>
<dbReference type="PDBsum" id="7D2U"/>
<dbReference type="PDBsum" id="7LT9"/>
<dbReference type="SMR" id="P48059"/>
<dbReference type="BioGRID" id="110175">
    <property type="interactions" value="96"/>
</dbReference>
<dbReference type="ComplexPortal" id="CPX-10304">
    <property type="entry name" value="ILK-PINCH-Parvin complex, LIMS1-PARVA variant"/>
</dbReference>
<dbReference type="ComplexPortal" id="CPX-10312">
    <property type="entry name" value="ILK-PINCH-Parvin complex, LIMS1-PARVB variant"/>
</dbReference>
<dbReference type="CORUM" id="P48059"/>
<dbReference type="DIP" id="DIP-40671N"/>
<dbReference type="FunCoup" id="P48059">
    <property type="interactions" value="1206"/>
</dbReference>
<dbReference type="IntAct" id="P48059">
    <property type="interactions" value="70"/>
</dbReference>
<dbReference type="MINT" id="P48059"/>
<dbReference type="STRING" id="9606.ENSP00000337598"/>
<dbReference type="GlyGen" id="P48059">
    <property type="glycosylation" value="1 site, 1 O-linked glycan (1 site)"/>
</dbReference>
<dbReference type="iPTMnet" id="P48059"/>
<dbReference type="PhosphoSitePlus" id="P48059"/>
<dbReference type="SwissPalm" id="P48059"/>
<dbReference type="BioMuta" id="LIMS1"/>
<dbReference type="DMDM" id="18266876"/>
<dbReference type="OGP" id="P48059"/>
<dbReference type="jPOST" id="P48059"/>
<dbReference type="MassIVE" id="P48059"/>
<dbReference type="PaxDb" id="9606-ENSP00000446121"/>
<dbReference type="PeptideAtlas" id="P48059"/>
<dbReference type="ProteomicsDB" id="55846">
    <molecule id="P48059-1"/>
</dbReference>
<dbReference type="ProteomicsDB" id="55847">
    <molecule id="P48059-2"/>
</dbReference>
<dbReference type="ProteomicsDB" id="55848">
    <molecule id="P48059-3"/>
</dbReference>
<dbReference type="ProteomicsDB" id="55849">
    <molecule id="P48059-4"/>
</dbReference>
<dbReference type="ProteomicsDB" id="55850">
    <molecule id="P48059-5"/>
</dbReference>
<dbReference type="Pumba" id="P48059"/>
<dbReference type="Antibodypedia" id="33091">
    <property type="antibodies" value="279 antibodies from 33 providers"/>
</dbReference>
<dbReference type="DNASU" id="3987"/>
<dbReference type="Ensembl" id="ENST00000332345.10">
    <molecule id="P48059-1"/>
    <property type="protein sequence ID" value="ENSP00000331775.6"/>
    <property type="gene ID" value="ENSG00000169756.17"/>
</dbReference>
<dbReference type="Ensembl" id="ENST00000338045.7">
    <molecule id="P48059-3"/>
    <property type="protein sequence ID" value="ENSP00000337598.4"/>
    <property type="gene ID" value="ENSG00000169756.17"/>
</dbReference>
<dbReference type="Ensembl" id="ENST00000393310.5">
    <molecule id="P48059-1"/>
    <property type="protein sequence ID" value="ENSP00000376987.1"/>
    <property type="gene ID" value="ENSG00000169756.17"/>
</dbReference>
<dbReference type="Ensembl" id="ENST00000409441.5">
    <molecule id="P48059-5"/>
    <property type="protein sequence ID" value="ENSP00000387264.1"/>
    <property type="gene ID" value="ENSG00000169756.17"/>
</dbReference>
<dbReference type="Ensembl" id="ENST00000410093.5">
    <molecule id="P48059-4"/>
    <property type="protein sequence ID" value="ENSP00000386926.1"/>
    <property type="gene ID" value="ENSG00000169756.17"/>
</dbReference>
<dbReference type="Ensembl" id="ENST00000544547.6">
    <molecule id="P48059-2"/>
    <property type="protein sequence ID" value="ENSP00000437912.1"/>
    <property type="gene ID" value="ENSG00000169756.17"/>
</dbReference>
<dbReference type="Ensembl" id="ENST00000695518.1">
    <molecule id="P48059-1"/>
    <property type="protein sequence ID" value="ENSP00000511981.1"/>
    <property type="gene ID" value="ENSG00000169756.17"/>
</dbReference>
<dbReference type="Ensembl" id="ENST00000695521.1">
    <molecule id="P48059-1"/>
    <property type="protein sequence ID" value="ENSP00000511984.1"/>
    <property type="gene ID" value="ENSG00000169756.17"/>
</dbReference>
<dbReference type="GeneID" id="3987"/>
<dbReference type="KEGG" id="hsa:3987"/>
<dbReference type="MANE-Select" id="ENST00000544547.6">
    <molecule id="P48059-2"/>
    <property type="protein sequence ID" value="ENSP00000437912.1"/>
    <property type="RefSeq nucleotide sequence ID" value="NM_001193483.3"/>
    <property type="RefSeq protein sequence ID" value="NP_001180412.1"/>
</dbReference>
<dbReference type="UCSC" id="uc002teg.4">
    <molecule id="P48059-1"/>
    <property type="organism name" value="human"/>
</dbReference>
<dbReference type="AGR" id="HGNC:6616"/>
<dbReference type="CTD" id="3987"/>
<dbReference type="DisGeNET" id="3987"/>
<dbReference type="GeneCards" id="LIMS1"/>
<dbReference type="HGNC" id="HGNC:6616">
    <property type="gene designation" value="LIMS1"/>
</dbReference>
<dbReference type="HPA" id="ENSG00000169756">
    <property type="expression patterns" value="Low tissue specificity"/>
</dbReference>
<dbReference type="MIM" id="602567">
    <property type="type" value="gene"/>
</dbReference>
<dbReference type="neXtProt" id="NX_P48059"/>
<dbReference type="OpenTargets" id="ENSG00000169756"/>
<dbReference type="PharmGKB" id="PA30389"/>
<dbReference type="VEuPathDB" id="HostDB:ENSG00000169756"/>
<dbReference type="eggNOG" id="KOG2272">
    <property type="taxonomic scope" value="Eukaryota"/>
</dbReference>
<dbReference type="GeneTree" id="ENSGT00940000153518"/>
<dbReference type="HOGENOM" id="CLU_001357_0_0_1"/>
<dbReference type="InParanoid" id="P48059"/>
<dbReference type="OMA" id="RYVCHKC"/>
<dbReference type="OrthoDB" id="20689at2759"/>
<dbReference type="PAN-GO" id="P48059">
    <property type="GO annotations" value="7 GO annotations based on evolutionary models"/>
</dbReference>
<dbReference type="PhylomeDB" id="P48059"/>
<dbReference type="TreeFam" id="TF314113"/>
<dbReference type="PathwayCommons" id="P48059"/>
<dbReference type="Reactome" id="R-HSA-446353">
    <property type="pathway name" value="Cell-extracellular matrix interactions"/>
</dbReference>
<dbReference type="Reactome" id="R-HSA-446388">
    <property type="pathway name" value="Regulation of cytoskeletal remodeling and cell spreading by IPP complex components"/>
</dbReference>
<dbReference type="SignaLink" id="P48059"/>
<dbReference type="SIGNOR" id="P48059"/>
<dbReference type="BioGRID-ORCS" id="3987">
    <property type="hits" value="250 hits in 1151 CRISPR screens"/>
</dbReference>
<dbReference type="ChiTaRS" id="LIMS1">
    <property type="organism name" value="human"/>
</dbReference>
<dbReference type="EvolutionaryTrace" id="P48059"/>
<dbReference type="GeneWiki" id="LIMS1"/>
<dbReference type="GenomeRNAi" id="3987"/>
<dbReference type="Pharos" id="P48059">
    <property type="development level" value="Tbio"/>
</dbReference>
<dbReference type="PRO" id="PR:P48059"/>
<dbReference type="Proteomes" id="UP000005640">
    <property type="component" value="Chromosome 2"/>
</dbReference>
<dbReference type="RNAct" id="P48059">
    <property type="molecule type" value="protein"/>
</dbReference>
<dbReference type="Bgee" id="ENSG00000169756">
    <property type="expression patterns" value="Expressed in monocyte and 183 other cell types or tissues"/>
</dbReference>
<dbReference type="ExpressionAtlas" id="P48059">
    <property type="expression patterns" value="baseline and differential"/>
</dbReference>
<dbReference type="GO" id="GO:0005911">
    <property type="term" value="C:cell-cell junction"/>
    <property type="evidence" value="ECO:0000315"/>
    <property type="project" value="UniProtKB"/>
</dbReference>
<dbReference type="GO" id="GO:0005737">
    <property type="term" value="C:cytoplasm"/>
    <property type="evidence" value="ECO:0000318"/>
    <property type="project" value="GO_Central"/>
</dbReference>
<dbReference type="GO" id="GO:0005829">
    <property type="term" value="C:cytosol"/>
    <property type="evidence" value="ECO:0000304"/>
    <property type="project" value="Reactome"/>
</dbReference>
<dbReference type="GO" id="GO:0005925">
    <property type="term" value="C:focal adhesion"/>
    <property type="evidence" value="ECO:0000314"/>
    <property type="project" value="UniProtKB"/>
</dbReference>
<dbReference type="GO" id="GO:0048471">
    <property type="term" value="C:perinuclear region of cytoplasm"/>
    <property type="evidence" value="ECO:0000314"/>
    <property type="project" value="UniProtKB"/>
</dbReference>
<dbReference type="GO" id="GO:0005886">
    <property type="term" value="C:plasma membrane"/>
    <property type="evidence" value="ECO:0007669"/>
    <property type="project" value="UniProtKB-SubCell"/>
</dbReference>
<dbReference type="GO" id="GO:0003779">
    <property type="term" value="F:actin binding"/>
    <property type="evidence" value="ECO:0007669"/>
    <property type="project" value="UniProtKB-KW"/>
</dbReference>
<dbReference type="GO" id="GO:0019901">
    <property type="term" value="F:protein kinase binding"/>
    <property type="evidence" value="ECO:0000353"/>
    <property type="project" value="UniProtKB"/>
</dbReference>
<dbReference type="GO" id="GO:0008270">
    <property type="term" value="F:zinc ion binding"/>
    <property type="evidence" value="ECO:0000314"/>
    <property type="project" value="UniProtKB"/>
</dbReference>
<dbReference type="GO" id="GO:0098609">
    <property type="term" value="P:cell-cell adhesion"/>
    <property type="evidence" value="ECO:0000318"/>
    <property type="project" value="GO_Central"/>
</dbReference>
<dbReference type="GO" id="GO:0045216">
    <property type="term" value="P:cell-cell junction organization"/>
    <property type="evidence" value="ECO:0000318"/>
    <property type="project" value="GO_Central"/>
</dbReference>
<dbReference type="GO" id="GO:0071560">
    <property type="term" value="P:cellular response to transforming growth factor beta stimulus"/>
    <property type="evidence" value="ECO:0000270"/>
    <property type="project" value="UniProtKB"/>
</dbReference>
<dbReference type="GO" id="GO:0045184">
    <property type="term" value="P:establishment of protein localization"/>
    <property type="evidence" value="ECO:0000315"/>
    <property type="project" value="UniProtKB"/>
</dbReference>
<dbReference type="GO" id="GO:0045892">
    <property type="term" value="P:negative regulation of DNA-templated transcription"/>
    <property type="evidence" value="ECO:0000314"/>
    <property type="project" value="UniProtKB"/>
</dbReference>
<dbReference type="GO" id="GO:0043123">
    <property type="term" value="P:positive regulation of canonical NF-kappaB signal transduction"/>
    <property type="evidence" value="ECO:0000315"/>
    <property type="project" value="CAFA"/>
</dbReference>
<dbReference type="GO" id="GO:0010811">
    <property type="term" value="P:positive regulation of cell-substrate adhesion"/>
    <property type="evidence" value="ECO:0000315"/>
    <property type="project" value="UniProtKB"/>
</dbReference>
<dbReference type="GO" id="GO:0051894">
    <property type="term" value="P:positive regulation of focal adhesion assembly"/>
    <property type="evidence" value="ECO:0000315"/>
    <property type="project" value="UniProtKB"/>
</dbReference>
<dbReference type="GO" id="GO:0010628">
    <property type="term" value="P:positive regulation of gene expression"/>
    <property type="evidence" value="ECO:0000315"/>
    <property type="project" value="UniProtKB"/>
</dbReference>
<dbReference type="GO" id="GO:0043547">
    <property type="term" value="P:positive regulation of GTPase activity"/>
    <property type="evidence" value="ECO:0000315"/>
    <property type="project" value="UniProtKB"/>
</dbReference>
<dbReference type="GO" id="GO:2001046">
    <property type="term" value="P:positive regulation of integrin-mediated signaling pathway"/>
    <property type="evidence" value="ECO:0000318"/>
    <property type="project" value="GO_Central"/>
</dbReference>
<dbReference type="GO" id="GO:1900026">
    <property type="term" value="P:positive regulation of substrate adhesion-dependent cell spreading"/>
    <property type="evidence" value="ECO:0000315"/>
    <property type="project" value="UniProtKB"/>
</dbReference>
<dbReference type="GO" id="GO:0033209">
    <property type="term" value="P:tumor necrosis factor-mediated signaling pathway"/>
    <property type="evidence" value="ECO:0000315"/>
    <property type="project" value="CAFA"/>
</dbReference>
<dbReference type="CDD" id="cd09331">
    <property type="entry name" value="LIM1_PINCH"/>
    <property type="match status" value="1"/>
</dbReference>
<dbReference type="CDD" id="cd09332">
    <property type="entry name" value="LIM2_PINCH"/>
    <property type="match status" value="1"/>
</dbReference>
<dbReference type="CDD" id="cd09333">
    <property type="entry name" value="LIM3_PINCH"/>
    <property type="match status" value="1"/>
</dbReference>
<dbReference type="CDD" id="cd09334">
    <property type="entry name" value="LIM4_PINCH"/>
    <property type="match status" value="1"/>
</dbReference>
<dbReference type="CDD" id="cd09335">
    <property type="entry name" value="LIM5_PINCH"/>
    <property type="match status" value="1"/>
</dbReference>
<dbReference type="FunFam" id="2.10.110.10:FF:000011">
    <property type="entry name" value="Lim and senescent cell antigen-like-containing"/>
    <property type="match status" value="1"/>
</dbReference>
<dbReference type="FunFam" id="2.10.110.10:FF:000017">
    <property type="entry name" value="Lim and senescent cell antigen-like-containing"/>
    <property type="match status" value="1"/>
</dbReference>
<dbReference type="FunFam" id="2.10.110.10:FF:000019">
    <property type="entry name" value="Lim and senescent cell antigen-like-containing"/>
    <property type="match status" value="1"/>
</dbReference>
<dbReference type="FunFam" id="2.10.110.10:FF:000021">
    <property type="entry name" value="Lim and senescent cell antigen-like-containing"/>
    <property type="match status" value="1"/>
</dbReference>
<dbReference type="FunFam" id="2.10.110.10:FF:000062">
    <property type="entry name" value="LIM domain-containing protein"/>
    <property type="match status" value="1"/>
</dbReference>
<dbReference type="Gene3D" id="2.10.110.10">
    <property type="entry name" value="Cysteine Rich Protein"/>
    <property type="match status" value="5"/>
</dbReference>
<dbReference type="InterPro" id="IPR047944">
    <property type="entry name" value="LIMS1/2-like_LIM1"/>
</dbReference>
<dbReference type="InterPro" id="IPR017351">
    <property type="entry name" value="PINCH-1-4-like"/>
</dbReference>
<dbReference type="InterPro" id="IPR047946">
    <property type="entry name" value="PINCH-1/2-like"/>
</dbReference>
<dbReference type="InterPro" id="IPR001781">
    <property type="entry name" value="Znf_LIM"/>
</dbReference>
<dbReference type="PANTHER" id="PTHR24210:SF13">
    <property type="entry name" value="LIM AND SENESCENT CELL ANTIGEN-LIKE-CONTAINING DOMAIN PROTEIN 1"/>
    <property type="match status" value="1"/>
</dbReference>
<dbReference type="PANTHER" id="PTHR24210">
    <property type="entry name" value="LIM DOMAIN-CONTAINING PROTEIN"/>
    <property type="match status" value="1"/>
</dbReference>
<dbReference type="Pfam" id="PF00412">
    <property type="entry name" value="LIM"/>
    <property type="match status" value="5"/>
</dbReference>
<dbReference type="PIRSF" id="PIRSF038003">
    <property type="entry name" value="PINCH"/>
    <property type="match status" value="1"/>
</dbReference>
<dbReference type="SMART" id="SM00132">
    <property type="entry name" value="LIM"/>
    <property type="match status" value="5"/>
</dbReference>
<dbReference type="SUPFAM" id="SSF57716">
    <property type="entry name" value="Glucocorticoid receptor-like (DNA-binding domain)"/>
    <property type="match status" value="6"/>
</dbReference>
<dbReference type="PROSITE" id="PS00478">
    <property type="entry name" value="LIM_DOMAIN_1"/>
    <property type="match status" value="4"/>
</dbReference>
<dbReference type="PROSITE" id="PS50023">
    <property type="entry name" value="LIM_DOMAIN_2"/>
    <property type="match status" value="5"/>
</dbReference>
<reference key="1">
    <citation type="journal article" date="1994" name="Biochem. Biophys. Res. Commun.">
        <title>A new LIM protein containing an autoepitope homologous to 'senescent cell antigen'.</title>
        <authorList>
            <person name="Rearden A."/>
        </authorList>
    </citation>
    <scope>NUCLEOTIDE SEQUENCE [MRNA] (ISOFORM 1)</scope>
    <source>
        <tissue>Fetal liver</tissue>
    </source>
</reference>
<reference key="2">
    <citation type="submission" date="2001-03" db="EMBL/GenBank/DDBJ databases">
        <authorList>
            <person name="Rearden A."/>
        </authorList>
    </citation>
    <scope>SEQUENCE REVISION TO C-TERMINUS</scope>
</reference>
<reference key="3">
    <citation type="journal article" date="2004" name="Nat. Genet.">
        <title>Complete sequencing and characterization of 21,243 full-length human cDNAs.</title>
        <authorList>
            <person name="Ota T."/>
            <person name="Suzuki Y."/>
            <person name="Nishikawa T."/>
            <person name="Otsuki T."/>
            <person name="Sugiyama T."/>
            <person name="Irie R."/>
            <person name="Wakamatsu A."/>
            <person name="Hayashi K."/>
            <person name="Sato H."/>
            <person name="Nagai K."/>
            <person name="Kimura K."/>
            <person name="Makita H."/>
            <person name="Sekine M."/>
            <person name="Obayashi M."/>
            <person name="Nishi T."/>
            <person name="Shibahara T."/>
            <person name="Tanaka T."/>
            <person name="Ishii S."/>
            <person name="Yamamoto J."/>
            <person name="Saito K."/>
            <person name="Kawai Y."/>
            <person name="Isono Y."/>
            <person name="Nakamura Y."/>
            <person name="Nagahari K."/>
            <person name="Murakami K."/>
            <person name="Yasuda T."/>
            <person name="Iwayanagi T."/>
            <person name="Wagatsuma M."/>
            <person name="Shiratori A."/>
            <person name="Sudo H."/>
            <person name="Hosoiri T."/>
            <person name="Kaku Y."/>
            <person name="Kodaira H."/>
            <person name="Kondo H."/>
            <person name="Sugawara M."/>
            <person name="Takahashi M."/>
            <person name="Kanda K."/>
            <person name="Yokoi T."/>
            <person name="Furuya T."/>
            <person name="Kikkawa E."/>
            <person name="Omura Y."/>
            <person name="Abe K."/>
            <person name="Kamihara K."/>
            <person name="Katsuta N."/>
            <person name="Sato K."/>
            <person name="Tanikawa M."/>
            <person name="Yamazaki M."/>
            <person name="Ninomiya K."/>
            <person name="Ishibashi T."/>
            <person name="Yamashita H."/>
            <person name="Murakawa K."/>
            <person name="Fujimori K."/>
            <person name="Tanai H."/>
            <person name="Kimata M."/>
            <person name="Watanabe M."/>
            <person name="Hiraoka S."/>
            <person name="Chiba Y."/>
            <person name="Ishida S."/>
            <person name="Ono Y."/>
            <person name="Takiguchi S."/>
            <person name="Watanabe S."/>
            <person name="Yosida M."/>
            <person name="Hotuta T."/>
            <person name="Kusano J."/>
            <person name="Kanehori K."/>
            <person name="Takahashi-Fujii A."/>
            <person name="Hara H."/>
            <person name="Tanase T.-O."/>
            <person name="Nomura Y."/>
            <person name="Togiya S."/>
            <person name="Komai F."/>
            <person name="Hara R."/>
            <person name="Takeuchi K."/>
            <person name="Arita M."/>
            <person name="Imose N."/>
            <person name="Musashino K."/>
            <person name="Yuuki H."/>
            <person name="Oshima A."/>
            <person name="Sasaki N."/>
            <person name="Aotsuka S."/>
            <person name="Yoshikawa Y."/>
            <person name="Matsunawa H."/>
            <person name="Ichihara T."/>
            <person name="Shiohata N."/>
            <person name="Sano S."/>
            <person name="Moriya S."/>
            <person name="Momiyama H."/>
            <person name="Satoh N."/>
            <person name="Takami S."/>
            <person name="Terashima Y."/>
            <person name="Suzuki O."/>
            <person name="Nakagawa S."/>
            <person name="Senoh A."/>
            <person name="Mizoguchi H."/>
            <person name="Goto Y."/>
            <person name="Shimizu F."/>
            <person name="Wakebe H."/>
            <person name="Hishigaki H."/>
            <person name="Watanabe T."/>
            <person name="Sugiyama A."/>
            <person name="Takemoto M."/>
            <person name="Kawakami B."/>
            <person name="Yamazaki M."/>
            <person name="Watanabe K."/>
            <person name="Kumagai A."/>
            <person name="Itakura S."/>
            <person name="Fukuzumi Y."/>
            <person name="Fujimori Y."/>
            <person name="Komiyama M."/>
            <person name="Tashiro H."/>
            <person name="Tanigami A."/>
            <person name="Fujiwara T."/>
            <person name="Ono T."/>
            <person name="Yamada K."/>
            <person name="Fujii Y."/>
            <person name="Ozaki K."/>
            <person name="Hirao M."/>
            <person name="Ohmori Y."/>
            <person name="Kawabata A."/>
            <person name="Hikiji T."/>
            <person name="Kobatake N."/>
            <person name="Inagaki H."/>
            <person name="Ikema Y."/>
            <person name="Okamoto S."/>
            <person name="Okitani R."/>
            <person name="Kawakami T."/>
            <person name="Noguchi S."/>
            <person name="Itoh T."/>
            <person name="Shigeta K."/>
            <person name="Senba T."/>
            <person name="Matsumura K."/>
            <person name="Nakajima Y."/>
            <person name="Mizuno T."/>
            <person name="Morinaga M."/>
            <person name="Sasaki M."/>
            <person name="Togashi T."/>
            <person name="Oyama M."/>
            <person name="Hata H."/>
            <person name="Watanabe M."/>
            <person name="Komatsu T."/>
            <person name="Mizushima-Sugano J."/>
            <person name="Satoh T."/>
            <person name="Shirai Y."/>
            <person name="Takahashi Y."/>
            <person name="Nakagawa K."/>
            <person name="Okumura K."/>
            <person name="Nagase T."/>
            <person name="Nomura N."/>
            <person name="Kikuchi H."/>
            <person name="Masuho Y."/>
            <person name="Yamashita R."/>
            <person name="Nakai K."/>
            <person name="Yada T."/>
            <person name="Nakamura Y."/>
            <person name="Ohara O."/>
            <person name="Isogai T."/>
            <person name="Sugano S."/>
        </authorList>
    </citation>
    <scope>NUCLEOTIDE SEQUENCE [LARGE SCALE MRNA] (ISOFORMS 1; 2; 3 AND 5)</scope>
    <source>
        <tissue>Testis</tissue>
        <tissue>Tongue</tissue>
        <tissue>Trachea</tissue>
    </source>
</reference>
<reference key="4">
    <citation type="journal article" date="2005" name="Nature">
        <title>Generation and annotation of the DNA sequences of human chromosomes 2 and 4.</title>
        <authorList>
            <person name="Hillier L.W."/>
            <person name="Graves T.A."/>
            <person name="Fulton R.S."/>
            <person name="Fulton L.A."/>
            <person name="Pepin K.H."/>
            <person name="Minx P."/>
            <person name="Wagner-McPherson C."/>
            <person name="Layman D."/>
            <person name="Wylie K."/>
            <person name="Sekhon M."/>
            <person name="Becker M.C."/>
            <person name="Fewell G.A."/>
            <person name="Delehaunty K.D."/>
            <person name="Miner T.L."/>
            <person name="Nash W.E."/>
            <person name="Kremitzki C."/>
            <person name="Oddy L."/>
            <person name="Du H."/>
            <person name="Sun H."/>
            <person name="Bradshaw-Cordum H."/>
            <person name="Ali J."/>
            <person name="Carter J."/>
            <person name="Cordes M."/>
            <person name="Harris A."/>
            <person name="Isak A."/>
            <person name="van Brunt A."/>
            <person name="Nguyen C."/>
            <person name="Du F."/>
            <person name="Courtney L."/>
            <person name="Kalicki J."/>
            <person name="Ozersky P."/>
            <person name="Abbott S."/>
            <person name="Armstrong J."/>
            <person name="Belter E.A."/>
            <person name="Caruso L."/>
            <person name="Cedroni M."/>
            <person name="Cotton M."/>
            <person name="Davidson T."/>
            <person name="Desai A."/>
            <person name="Elliott G."/>
            <person name="Erb T."/>
            <person name="Fronick C."/>
            <person name="Gaige T."/>
            <person name="Haakenson W."/>
            <person name="Haglund K."/>
            <person name="Holmes A."/>
            <person name="Harkins R."/>
            <person name="Kim K."/>
            <person name="Kruchowski S.S."/>
            <person name="Strong C.M."/>
            <person name="Grewal N."/>
            <person name="Goyea E."/>
            <person name="Hou S."/>
            <person name="Levy A."/>
            <person name="Martinka S."/>
            <person name="Mead K."/>
            <person name="McLellan M.D."/>
            <person name="Meyer R."/>
            <person name="Randall-Maher J."/>
            <person name="Tomlinson C."/>
            <person name="Dauphin-Kohlberg S."/>
            <person name="Kozlowicz-Reilly A."/>
            <person name="Shah N."/>
            <person name="Swearengen-Shahid S."/>
            <person name="Snider J."/>
            <person name="Strong J.T."/>
            <person name="Thompson J."/>
            <person name="Yoakum M."/>
            <person name="Leonard S."/>
            <person name="Pearman C."/>
            <person name="Trani L."/>
            <person name="Radionenko M."/>
            <person name="Waligorski J.E."/>
            <person name="Wang C."/>
            <person name="Rock S.M."/>
            <person name="Tin-Wollam A.-M."/>
            <person name="Maupin R."/>
            <person name="Latreille P."/>
            <person name="Wendl M.C."/>
            <person name="Yang S.-P."/>
            <person name="Pohl C."/>
            <person name="Wallis J.W."/>
            <person name="Spieth J."/>
            <person name="Bieri T.A."/>
            <person name="Berkowicz N."/>
            <person name="Nelson J.O."/>
            <person name="Osborne J."/>
            <person name="Ding L."/>
            <person name="Meyer R."/>
            <person name="Sabo A."/>
            <person name="Shotland Y."/>
            <person name="Sinha P."/>
            <person name="Wohldmann P.E."/>
            <person name="Cook L.L."/>
            <person name="Hickenbotham M.T."/>
            <person name="Eldred J."/>
            <person name="Williams D."/>
            <person name="Jones T.A."/>
            <person name="She X."/>
            <person name="Ciccarelli F.D."/>
            <person name="Izaurralde E."/>
            <person name="Taylor J."/>
            <person name="Schmutz J."/>
            <person name="Myers R.M."/>
            <person name="Cox D.R."/>
            <person name="Huang X."/>
            <person name="McPherson J.D."/>
            <person name="Mardis E.R."/>
            <person name="Clifton S.W."/>
            <person name="Warren W.C."/>
            <person name="Chinwalla A.T."/>
            <person name="Eddy S.R."/>
            <person name="Marra M.A."/>
            <person name="Ovcharenko I."/>
            <person name="Furey T.S."/>
            <person name="Miller W."/>
            <person name="Eichler E.E."/>
            <person name="Bork P."/>
            <person name="Suyama M."/>
            <person name="Torrents D."/>
            <person name="Waterston R.H."/>
            <person name="Wilson R.K."/>
        </authorList>
    </citation>
    <scope>NUCLEOTIDE SEQUENCE [LARGE SCALE GENOMIC DNA]</scope>
</reference>
<reference key="5">
    <citation type="journal article" date="2004" name="Genome Res.">
        <title>The status, quality, and expansion of the NIH full-length cDNA project: the Mammalian Gene Collection (MGC).</title>
        <authorList>
            <consortium name="The MGC Project Team"/>
        </authorList>
    </citation>
    <scope>NUCLEOTIDE SEQUENCE [LARGE SCALE MRNA] (ISOFORM 1)</scope>
    <source>
        <tissue>Bone marrow</tissue>
    </source>
</reference>
<reference key="6">
    <citation type="journal article" date="2003" name="Nat. Biotechnol.">
        <title>Exploring proteomes and analyzing protein processing by mass spectrometric identification of sorted N-terminal peptides.</title>
        <authorList>
            <person name="Gevaert K."/>
            <person name="Goethals M."/>
            <person name="Martens L."/>
            <person name="Van Damme J."/>
            <person name="Staes A."/>
            <person name="Thomas G.R."/>
            <person name="Vandekerckhove J."/>
        </authorList>
    </citation>
    <scope>PROTEIN SEQUENCE OF 2-12</scope>
    <scope>ACETYLATION AT ALA-2</scope>
    <source>
        <tissue>Platelet</tissue>
    </source>
</reference>
<reference key="7">
    <citation type="journal article" date="2001" name="J. Cell Biol.">
        <title>A new focal adhesion protein that interacts with integrin-linked kinase and regulates cell adhesion and spreading.</title>
        <authorList>
            <person name="Tu Y."/>
            <person name="Huang Y."/>
            <person name="Zhang Y."/>
            <person name="Hua Y."/>
            <person name="Wu C."/>
        </authorList>
    </citation>
    <scope>IDENTIFICATION IN IPP COMPLEX</scope>
</reference>
<reference key="8">
    <citation type="journal article" date="2002" name="J. Cell Sci.">
        <title>Assembly of the PINCH-ILK-CH-ILKBP complex precedes and is essential for localization of each component to cell-matrix adhesion sites.</title>
        <authorList>
            <person name="Zhang Y."/>
            <person name="Chen K."/>
            <person name="Tu Y."/>
            <person name="Velyvis A."/>
            <person name="Yang Y."/>
            <person name="Qin J."/>
            <person name="Wu C."/>
        </authorList>
    </citation>
    <scope>IDENTIFICATION IN IPP COMPLEX</scope>
    <scope>SUBCELLULAR LOCATION</scope>
    <scope>MUTAGENESIS OF GLN-40</scope>
</reference>
<reference key="9">
    <citation type="journal article" date="1998" name="Mol. Biol. Cell">
        <title>Nck-2, a novel Src homology2/3-containing adaptor protein that interacts with the LIM-only protein PINCH and components of growth factor receptor kinase-signaling pathways.</title>
        <authorList>
            <person name="Tu Y."/>
            <person name="Li F."/>
            <person name="Wu C."/>
        </authorList>
    </citation>
    <scope>INTERACTION WITH NCK2</scope>
</reference>
<reference key="10">
    <citation type="journal article" date="1999" name="Int. J. Cancer">
        <title>Antigens recognized by autologous antibody in patients with renal-cell carcinoma.</title>
        <authorList>
            <person name="Scanlan M.J."/>
            <person name="Gordan J.D."/>
            <person name="Williamson B."/>
            <person name="Stockert E."/>
            <person name="Bander N.H."/>
            <person name="Jongeneel C.V."/>
            <person name="Gure A.O."/>
            <person name="Jaeger D."/>
            <person name="Jaeger E."/>
            <person name="Knuth A."/>
            <person name="Chen Y.-T."/>
            <person name="Old L.J."/>
        </authorList>
    </citation>
    <scope>IDENTIFICATION AS A RENAL CANCER ANTIGEN</scope>
    <source>
        <tissue>Renal cell carcinoma</tissue>
    </source>
</reference>
<reference key="11">
    <citation type="journal article" date="1999" name="Mol. Cell. Biol.">
        <title>The LIM-only protein PINCH directly interacts with integrin-linked kinase and is recruited to integrin-rich sites in spreading cells.</title>
        <authorList>
            <person name="Tu Y."/>
            <person name="Li F."/>
            <person name="Goicoechea S."/>
            <person name="Wu C."/>
        </authorList>
    </citation>
    <scope>INTERACTION WITH ILK AND NCK2</scope>
    <scope>SUBCELLULAR LOCATION</scope>
</reference>
<reference key="12">
    <citation type="journal article" date="2011" name="BMC Syst. Biol.">
        <title>Initial characterization of the human central proteome.</title>
        <authorList>
            <person name="Burkard T.R."/>
            <person name="Planyavsky M."/>
            <person name="Kaupe I."/>
            <person name="Breitwieser F.P."/>
            <person name="Buerckstuemmer T."/>
            <person name="Bennett K.L."/>
            <person name="Superti-Furga G."/>
            <person name="Colinge J."/>
        </authorList>
    </citation>
    <scope>IDENTIFICATION BY MASS SPECTROMETRY [LARGE SCALE ANALYSIS]</scope>
</reference>
<reference key="13">
    <citation type="journal article" date="2001" name="J. Biol. Chem.">
        <title>Solution structure of the focal adhesion adaptor PINCH LIM1 domain and characterization of its interaction with the integrin-linked kinase ankyrin repeat domain.</title>
        <authorList>
            <person name="Velyvis A."/>
            <person name="Yang Y."/>
            <person name="Wu C."/>
            <person name="Qin J."/>
        </authorList>
    </citation>
    <scope>STRUCTURE BY NMR OF 1-70</scope>
</reference>
<reference key="14">
    <citation type="journal article" date="2003" name="Nat. Struct. Biol.">
        <title>Structural and functional insights into PINCH LIM4 domain-mediated integrin signaling.</title>
        <authorList>
            <person name="Velyvis A."/>
            <person name="Vaynberg J."/>
            <person name="Yang Y."/>
            <person name="Vinogradova O."/>
            <person name="Zhang Y."/>
            <person name="Wu C."/>
            <person name="Qin J."/>
        </authorList>
    </citation>
    <scope>STRUCTURE BY NMR OF 188-251</scope>
</reference>
<reference key="15">
    <citation type="submission" date="2006-06" db="PDB data bank">
        <title>Solution structure of the second and third LIM domain of particularly interesting new Cys-His protein (PINCH).</title>
        <authorList>
            <consortium name="RIKEN structural genomics initiative (RSGI)"/>
        </authorList>
    </citation>
    <scope>STRUCTURE BY NMR OF 71-190</scope>
</reference>
<reference key="16">
    <citation type="journal article" date="2008" name="Proc. Natl. Acad. Sci. U.S.A.">
        <title>The structural basis of integrin-linked kinase-PINCH interactions.</title>
        <authorList>
            <person name="Chiswell B.P."/>
            <person name="Zhang R."/>
            <person name="Murphy J.W."/>
            <person name="Boggon T.J."/>
            <person name="Calderwood D.A."/>
        </authorList>
    </citation>
    <scope>X-RAY CRYSTALLOGRAPHY (1.6 ANGSTROMS) OF 6-68 IN COMPLEX WITH ILK</scope>
    <scope>MUTAGENESIS OF PHE-42; HIS-61; ASP-62 AND LEU-66</scope>
</reference>
<reference key="17">
    <citation type="journal article" date="2009" name="J. Biol. Chem.">
        <title>Structural basis of focal adhesion localization of LIM-only adaptor PINCH by integrin-linked kinase.</title>
        <authorList>
            <person name="Yang Y."/>
            <person name="Wang X."/>
            <person name="Hawkins C.A."/>
            <person name="Chen K."/>
            <person name="Vaynberg J."/>
            <person name="Mao X."/>
            <person name="Tu Y."/>
            <person name="Zuo X."/>
            <person name="Wang J."/>
            <person name="Wang Y.-X."/>
            <person name="Wu C."/>
            <person name="Tjandra N."/>
            <person name="Qin J."/>
        </authorList>
    </citation>
    <scope>STRUCTURE BY NMR OF 1-70 IN COMPLEX WITH ILK</scope>
    <scope>MUTAGENESIS OF PHE-42 AND ARG-56</scope>
    <scope>SUBCELLULAR LOCATION</scope>
</reference>
<reference evidence="13" key="18">
    <citation type="journal article" date="2018" name="Nat. Commun.">
        <title>Non-catalytic signaling by pseudokinase ILK for regulating cell adhesion.</title>
        <authorList>
            <person name="Vaynberg J."/>
            <person name="Fukuda K."/>
            <person name="Lu F."/>
            <person name="Bialkowska K."/>
            <person name="Chen Y."/>
            <person name="Plow E.F."/>
            <person name="Qin J."/>
        </authorList>
    </citation>
    <scope>STRUCTURE BY NMR OF 249-325</scope>
    <scope>FUNCTION</scope>
    <scope>IDENTIFICATION IN IPP COMPLEX</scope>
    <scope>MUTAGENESIS OF 307-PHE--LYS-313</scope>
</reference>
<organism>
    <name type="scientific">Homo sapiens</name>
    <name type="common">Human</name>
    <dbReference type="NCBI Taxonomy" id="9606"/>
    <lineage>
        <taxon>Eukaryota</taxon>
        <taxon>Metazoa</taxon>
        <taxon>Chordata</taxon>
        <taxon>Craniata</taxon>
        <taxon>Vertebrata</taxon>
        <taxon>Euteleostomi</taxon>
        <taxon>Mammalia</taxon>
        <taxon>Eutheria</taxon>
        <taxon>Euarchontoglires</taxon>
        <taxon>Primates</taxon>
        <taxon>Haplorrhini</taxon>
        <taxon>Catarrhini</taxon>
        <taxon>Hominidae</taxon>
        <taxon>Homo</taxon>
    </lineage>
</organism>
<protein>
    <recommendedName>
        <fullName>LIM and senescent cell antigen-like-containing domain protein 1</fullName>
    </recommendedName>
    <alternativeName>
        <fullName>Particularly interesting new Cys-His protein 1</fullName>
        <shortName>PINCH-1</shortName>
    </alternativeName>
    <alternativeName>
        <fullName>Renal carcinoma antigen NY-REN-48</fullName>
    </alternativeName>
</protein>